<keyword id="KW-0143">Chaperone</keyword>
<keyword id="KW-0963">Cytoplasm</keyword>
<keyword id="KW-0235">DNA replication</keyword>
<keyword id="KW-0479">Metal-binding</keyword>
<keyword id="KW-1185">Reference proteome</keyword>
<keyword id="KW-0677">Repeat</keyword>
<keyword id="KW-0346">Stress response</keyword>
<keyword id="KW-0862">Zinc</keyword>
<keyword id="KW-0863">Zinc-finger</keyword>
<gene>
    <name evidence="1" type="primary">dnaJ</name>
    <name type="ordered locus">BPSL2826</name>
</gene>
<comment type="function">
    <text evidence="1">Participates actively in the response to hyperosmotic and heat shock by preventing the aggregation of stress-denatured proteins and by disaggregating proteins, also in an autonomous, DnaK-independent fashion. Unfolded proteins bind initially to DnaJ; upon interaction with the DnaJ-bound protein, DnaK hydrolyzes its bound ATP, resulting in the formation of a stable complex. GrpE releases ADP from DnaK; ATP binding to DnaK triggers the release of the substrate protein, thus completing the reaction cycle. Several rounds of ATP-dependent interactions between DnaJ, DnaK and GrpE are required for fully efficient folding. Also involved, together with DnaK and GrpE, in the DNA replication of plasmids through activation of initiation proteins.</text>
</comment>
<comment type="cofactor">
    <cofactor evidence="1">
        <name>Zn(2+)</name>
        <dbReference type="ChEBI" id="CHEBI:29105"/>
    </cofactor>
    <text evidence="1">Binds 2 Zn(2+) ions per monomer.</text>
</comment>
<comment type="subunit">
    <text evidence="1">Homodimer.</text>
</comment>
<comment type="subcellular location">
    <subcellularLocation>
        <location evidence="1">Cytoplasm</location>
    </subcellularLocation>
</comment>
<comment type="domain">
    <text evidence="1">The J domain is necessary and sufficient to stimulate DnaK ATPase activity. Zinc center 1 plays an important role in the autonomous, DnaK-independent chaperone activity of DnaJ. Zinc center 2 is essential for interaction with DnaK and for DnaJ activity.</text>
</comment>
<comment type="similarity">
    <text evidence="1">Belongs to the DnaJ family.</text>
</comment>
<proteinExistence type="inferred from homology"/>
<name>DNAJ_BURPS</name>
<protein>
    <recommendedName>
        <fullName evidence="1">Chaperone protein DnaJ</fullName>
    </recommendedName>
</protein>
<sequence length="376" mass="40597">MAKRDYYEVLGVAKNASDDEIKKAYRKLAMKYHPDRNPDSKDAEEHFKEAKEAYEMLSDGQKRAAYDQYGHAGVDPNVGAAGAQGFGGFADAFGDIFGDIFGQAAGGGRARGGPQVYRGADLRYSMEITLEQAAHGYDTQIRVPSWAACGVCHGSGAKPGTKPETCPTCHGQGTVRMSQGFFSIQQTCPKCHGTGTYIPEPCVHCHGSGKVKETKTLEVKIPAGIDDGMRIRSAGNGEPGINGGPSGDLYVEIHIKPHAVFERDGDDLHCQMPIPFTTAALGGEIEVPTLAGRASFTVPEGTQSGKTFRLRGKGIKGLRSSIAGDLYVHVQVETPVKLTDQQRDLLKQFEKSLAEGGPRHSPQSKSWFDRVKSFFE</sequence>
<accession>Q63R47</accession>
<reference key="1">
    <citation type="journal article" date="2004" name="Proc. Natl. Acad. Sci. U.S.A.">
        <title>Genomic plasticity of the causative agent of melioidosis, Burkholderia pseudomallei.</title>
        <authorList>
            <person name="Holden M.T.G."/>
            <person name="Titball R.W."/>
            <person name="Peacock S.J."/>
            <person name="Cerdeno-Tarraga A.-M."/>
            <person name="Atkins T."/>
            <person name="Crossman L.C."/>
            <person name="Pitt T."/>
            <person name="Churcher C."/>
            <person name="Mungall K.L."/>
            <person name="Bentley S.D."/>
            <person name="Sebaihia M."/>
            <person name="Thomson N.R."/>
            <person name="Bason N."/>
            <person name="Beacham I.R."/>
            <person name="Brooks K."/>
            <person name="Brown K.A."/>
            <person name="Brown N.F."/>
            <person name="Challis G.L."/>
            <person name="Cherevach I."/>
            <person name="Chillingworth T."/>
            <person name="Cronin A."/>
            <person name="Crossett B."/>
            <person name="Davis P."/>
            <person name="DeShazer D."/>
            <person name="Feltwell T."/>
            <person name="Fraser A."/>
            <person name="Hance Z."/>
            <person name="Hauser H."/>
            <person name="Holroyd S."/>
            <person name="Jagels K."/>
            <person name="Keith K.E."/>
            <person name="Maddison M."/>
            <person name="Moule S."/>
            <person name="Price C."/>
            <person name="Quail M.A."/>
            <person name="Rabbinowitsch E."/>
            <person name="Rutherford K."/>
            <person name="Sanders M."/>
            <person name="Simmonds M."/>
            <person name="Songsivilai S."/>
            <person name="Stevens K."/>
            <person name="Tumapa S."/>
            <person name="Vesaratchavest M."/>
            <person name="Whitehead S."/>
            <person name="Yeats C."/>
            <person name="Barrell B.G."/>
            <person name="Oyston P.C.F."/>
            <person name="Parkhill J."/>
        </authorList>
    </citation>
    <scope>NUCLEOTIDE SEQUENCE [LARGE SCALE GENOMIC DNA]</scope>
    <source>
        <strain>K96243</strain>
    </source>
</reference>
<organism>
    <name type="scientific">Burkholderia pseudomallei (strain K96243)</name>
    <dbReference type="NCBI Taxonomy" id="272560"/>
    <lineage>
        <taxon>Bacteria</taxon>
        <taxon>Pseudomonadati</taxon>
        <taxon>Pseudomonadota</taxon>
        <taxon>Betaproteobacteria</taxon>
        <taxon>Burkholderiales</taxon>
        <taxon>Burkholderiaceae</taxon>
        <taxon>Burkholderia</taxon>
        <taxon>pseudomallei group</taxon>
    </lineage>
</organism>
<dbReference type="EMBL" id="BX571965">
    <property type="protein sequence ID" value="CAH36836.1"/>
    <property type="molecule type" value="Genomic_DNA"/>
</dbReference>
<dbReference type="RefSeq" id="WP_004522147.1">
    <property type="nucleotide sequence ID" value="NZ_CP009538.1"/>
</dbReference>
<dbReference type="RefSeq" id="YP_109421.1">
    <property type="nucleotide sequence ID" value="NC_006350.1"/>
</dbReference>
<dbReference type="SMR" id="Q63R47"/>
<dbReference type="STRING" id="272560.BPSL2826"/>
<dbReference type="GeneID" id="93061414"/>
<dbReference type="KEGG" id="bps:BPSL2826"/>
<dbReference type="PATRIC" id="fig|272560.51.peg.2478"/>
<dbReference type="eggNOG" id="COG0484">
    <property type="taxonomic scope" value="Bacteria"/>
</dbReference>
<dbReference type="Proteomes" id="UP000000605">
    <property type="component" value="Chromosome 1"/>
</dbReference>
<dbReference type="GO" id="GO:0005737">
    <property type="term" value="C:cytoplasm"/>
    <property type="evidence" value="ECO:0007669"/>
    <property type="project" value="UniProtKB-SubCell"/>
</dbReference>
<dbReference type="GO" id="GO:0005524">
    <property type="term" value="F:ATP binding"/>
    <property type="evidence" value="ECO:0007669"/>
    <property type="project" value="InterPro"/>
</dbReference>
<dbReference type="GO" id="GO:0031072">
    <property type="term" value="F:heat shock protein binding"/>
    <property type="evidence" value="ECO:0007669"/>
    <property type="project" value="InterPro"/>
</dbReference>
<dbReference type="GO" id="GO:0051082">
    <property type="term" value="F:unfolded protein binding"/>
    <property type="evidence" value="ECO:0007669"/>
    <property type="project" value="UniProtKB-UniRule"/>
</dbReference>
<dbReference type="GO" id="GO:0008270">
    <property type="term" value="F:zinc ion binding"/>
    <property type="evidence" value="ECO:0007669"/>
    <property type="project" value="UniProtKB-UniRule"/>
</dbReference>
<dbReference type="GO" id="GO:0051085">
    <property type="term" value="P:chaperone cofactor-dependent protein refolding"/>
    <property type="evidence" value="ECO:0007669"/>
    <property type="project" value="TreeGrafter"/>
</dbReference>
<dbReference type="GO" id="GO:0006260">
    <property type="term" value="P:DNA replication"/>
    <property type="evidence" value="ECO:0007669"/>
    <property type="project" value="UniProtKB-KW"/>
</dbReference>
<dbReference type="GO" id="GO:0042026">
    <property type="term" value="P:protein refolding"/>
    <property type="evidence" value="ECO:0007669"/>
    <property type="project" value="TreeGrafter"/>
</dbReference>
<dbReference type="GO" id="GO:0009408">
    <property type="term" value="P:response to heat"/>
    <property type="evidence" value="ECO:0007669"/>
    <property type="project" value="InterPro"/>
</dbReference>
<dbReference type="CDD" id="cd06257">
    <property type="entry name" value="DnaJ"/>
    <property type="match status" value="1"/>
</dbReference>
<dbReference type="CDD" id="cd10747">
    <property type="entry name" value="DnaJ_C"/>
    <property type="match status" value="1"/>
</dbReference>
<dbReference type="CDD" id="cd10719">
    <property type="entry name" value="DnaJ_zf"/>
    <property type="match status" value="1"/>
</dbReference>
<dbReference type="FunFam" id="1.10.287.110:FF:000031">
    <property type="entry name" value="Molecular chaperone DnaJ"/>
    <property type="match status" value="1"/>
</dbReference>
<dbReference type="FunFam" id="2.10.230.10:FF:000002">
    <property type="entry name" value="Molecular chaperone DnaJ"/>
    <property type="match status" value="1"/>
</dbReference>
<dbReference type="FunFam" id="2.60.260.20:FF:000004">
    <property type="entry name" value="Molecular chaperone DnaJ"/>
    <property type="match status" value="1"/>
</dbReference>
<dbReference type="Gene3D" id="1.10.287.110">
    <property type="entry name" value="DnaJ domain"/>
    <property type="match status" value="1"/>
</dbReference>
<dbReference type="Gene3D" id="2.10.230.10">
    <property type="entry name" value="Heat shock protein DnaJ, cysteine-rich domain"/>
    <property type="match status" value="1"/>
</dbReference>
<dbReference type="Gene3D" id="2.60.260.20">
    <property type="entry name" value="Urease metallochaperone UreE, N-terminal domain"/>
    <property type="match status" value="2"/>
</dbReference>
<dbReference type="HAMAP" id="MF_01152">
    <property type="entry name" value="DnaJ"/>
    <property type="match status" value="1"/>
</dbReference>
<dbReference type="InterPro" id="IPR012724">
    <property type="entry name" value="DnaJ"/>
</dbReference>
<dbReference type="InterPro" id="IPR002939">
    <property type="entry name" value="DnaJ_C"/>
</dbReference>
<dbReference type="InterPro" id="IPR001623">
    <property type="entry name" value="DnaJ_domain"/>
</dbReference>
<dbReference type="InterPro" id="IPR018253">
    <property type="entry name" value="DnaJ_domain_CS"/>
</dbReference>
<dbReference type="InterPro" id="IPR008971">
    <property type="entry name" value="HSP40/DnaJ_pept-bd"/>
</dbReference>
<dbReference type="InterPro" id="IPR001305">
    <property type="entry name" value="HSP_DnaJ_Cys-rich_dom"/>
</dbReference>
<dbReference type="InterPro" id="IPR036410">
    <property type="entry name" value="HSP_DnaJ_Cys-rich_dom_sf"/>
</dbReference>
<dbReference type="InterPro" id="IPR036869">
    <property type="entry name" value="J_dom_sf"/>
</dbReference>
<dbReference type="NCBIfam" id="TIGR02349">
    <property type="entry name" value="DnaJ_bact"/>
    <property type="match status" value="1"/>
</dbReference>
<dbReference type="NCBIfam" id="NF008035">
    <property type="entry name" value="PRK10767.1"/>
    <property type="match status" value="1"/>
</dbReference>
<dbReference type="PANTHER" id="PTHR43096:SF48">
    <property type="entry name" value="CHAPERONE PROTEIN DNAJ"/>
    <property type="match status" value="1"/>
</dbReference>
<dbReference type="PANTHER" id="PTHR43096">
    <property type="entry name" value="DNAJ HOMOLOG 1, MITOCHONDRIAL-RELATED"/>
    <property type="match status" value="1"/>
</dbReference>
<dbReference type="Pfam" id="PF00226">
    <property type="entry name" value="DnaJ"/>
    <property type="match status" value="1"/>
</dbReference>
<dbReference type="Pfam" id="PF01556">
    <property type="entry name" value="DnaJ_C"/>
    <property type="match status" value="1"/>
</dbReference>
<dbReference type="Pfam" id="PF00684">
    <property type="entry name" value="DnaJ_CXXCXGXG"/>
    <property type="match status" value="1"/>
</dbReference>
<dbReference type="PRINTS" id="PR00625">
    <property type="entry name" value="JDOMAIN"/>
</dbReference>
<dbReference type="SMART" id="SM00271">
    <property type="entry name" value="DnaJ"/>
    <property type="match status" value="1"/>
</dbReference>
<dbReference type="SUPFAM" id="SSF46565">
    <property type="entry name" value="Chaperone J-domain"/>
    <property type="match status" value="1"/>
</dbReference>
<dbReference type="SUPFAM" id="SSF57938">
    <property type="entry name" value="DnaJ/Hsp40 cysteine-rich domain"/>
    <property type="match status" value="1"/>
</dbReference>
<dbReference type="SUPFAM" id="SSF49493">
    <property type="entry name" value="HSP40/DnaJ peptide-binding domain"/>
    <property type="match status" value="2"/>
</dbReference>
<dbReference type="PROSITE" id="PS00636">
    <property type="entry name" value="DNAJ_1"/>
    <property type="match status" value="1"/>
</dbReference>
<dbReference type="PROSITE" id="PS50076">
    <property type="entry name" value="DNAJ_2"/>
    <property type="match status" value="1"/>
</dbReference>
<dbReference type="PROSITE" id="PS51188">
    <property type="entry name" value="ZF_CR"/>
    <property type="match status" value="1"/>
</dbReference>
<evidence type="ECO:0000255" key="1">
    <source>
        <dbReference type="HAMAP-Rule" id="MF_01152"/>
    </source>
</evidence>
<feature type="chain" id="PRO_0000070750" description="Chaperone protein DnaJ">
    <location>
        <begin position="1"/>
        <end position="376"/>
    </location>
</feature>
<feature type="domain" description="J" evidence="1">
    <location>
        <begin position="5"/>
        <end position="70"/>
    </location>
</feature>
<feature type="repeat" description="CXXCXGXG motif">
    <location>
        <begin position="149"/>
        <end position="156"/>
    </location>
</feature>
<feature type="repeat" description="CXXCXGXG motif">
    <location>
        <begin position="166"/>
        <end position="173"/>
    </location>
</feature>
<feature type="repeat" description="CXXCXGXG motif">
    <location>
        <begin position="188"/>
        <end position="195"/>
    </location>
</feature>
<feature type="repeat" description="CXXCXGXG motif">
    <location>
        <begin position="202"/>
        <end position="209"/>
    </location>
</feature>
<feature type="zinc finger region" description="CR-type" evidence="1">
    <location>
        <begin position="136"/>
        <end position="214"/>
    </location>
</feature>
<feature type="binding site" evidence="1">
    <location>
        <position position="149"/>
    </location>
    <ligand>
        <name>Zn(2+)</name>
        <dbReference type="ChEBI" id="CHEBI:29105"/>
        <label>1</label>
    </ligand>
</feature>
<feature type="binding site" evidence="1">
    <location>
        <position position="152"/>
    </location>
    <ligand>
        <name>Zn(2+)</name>
        <dbReference type="ChEBI" id="CHEBI:29105"/>
        <label>1</label>
    </ligand>
</feature>
<feature type="binding site" evidence="1">
    <location>
        <position position="166"/>
    </location>
    <ligand>
        <name>Zn(2+)</name>
        <dbReference type="ChEBI" id="CHEBI:29105"/>
        <label>2</label>
    </ligand>
</feature>
<feature type="binding site" evidence="1">
    <location>
        <position position="169"/>
    </location>
    <ligand>
        <name>Zn(2+)</name>
        <dbReference type="ChEBI" id="CHEBI:29105"/>
        <label>2</label>
    </ligand>
</feature>
<feature type="binding site" evidence="1">
    <location>
        <position position="188"/>
    </location>
    <ligand>
        <name>Zn(2+)</name>
        <dbReference type="ChEBI" id="CHEBI:29105"/>
        <label>2</label>
    </ligand>
</feature>
<feature type="binding site" evidence="1">
    <location>
        <position position="191"/>
    </location>
    <ligand>
        <name>Zn(2+)</name>
        <dbReference type="ChEBI" id="CHEBI:29105"/>
        <label>2</label>
    </ligand>
</feature>
<feature type="binding site" evidence="1">
    <location>
        <position position="202"/>
    </location>
    <ligand>
        <name>Zn(2+)</name>
        <dbReference type="ChEBI" id="CHEBI:29105"/>
        <label>1</label>
    </ligand>
</feature>
<feature type="binding site" evidence="1">
    <location>
        <position position="205"/>
    </location>
    <ligand>
        <name>Zn(2+)</name>
        <dbReference type="ChEBI" id="CHEBI:29105"/>
        <label>1</label>
    </ligand>
</feature>